<proteinExistence type="inferred from homology"/>
<comment type="similarity">
    <text evidence="1">Belongs to the UPF0173 family.</text>
</comment>
<dbReference type="EMBL" id="CU633749">
    <property type="protein sequence ID" value="CAQ69691.1"/>
    <property type="molecule type" value="Genomic_DNA"/>
</dbReference>
<dbReference type="SMR" id="B3R2H3"/>
<dbReference type="KEGG" id="cti:RALTA_A1748"/>
<dbReference type="eggNOG" id="COG2220">
    <property type="taxonomic scope" value="Bacteria"/>
</dbReference>
<dbReference type="HOGENOM" id="CLU_070010_4_0_4"/>
<dbReference type="BioCyc" id="CTAI977880:RALTA_RS08425-MONOMER"/>
<dbReference type="Proteomes" id="UP000001692">
    <property type="component" value="Chromosome 1"/>
</dbReference>
<dbReference type="GO" id="GO:0016787">
    <property type="term" value="F:hydrolase activity"/>
    <property type="evidence" value="ECO:0007669"/>
    <property type="project" value="UniProtKB-UniRule"/>
</dbReference>
<dbReference type="Gene3D" id="3.60.15.10">
    <property type="entry name" value="Ribonuclease Z/Hydroxyacylglutathione hydrolase-like"/>
    <property type="match status" value="1"/>
</dbReference>
<dbReference type="HAMAP" id="MF_00457">
    <property type="entry name" value="UPF0173"/>
    <property type="match status" value="1"/>
</dbReference>
<dbReference type="InterPro" id="IPR001279">
    <property type="entry name" value="Metallo-B-lactamas"/>
</dbReference>
<dbReference type="InterPro" id="IPR036866">
    <property type="entry name" value="RibonucZ/Hydroxyglut_hydro"/>
</dbReference>
<dbReference type="InterPro" id="IPR022877">
    <property type="entry name" value="UPF0173"/>
</dbReference>
<dbReference type="InterPro" id="IPR050114">
    <property type="entry name" value="UPF0173_UPF0282_UlaG_hydrolase"/>
</dbReference>
<dbReference type="NCBIfam" id="NF001911">
    <property type="entry name" value="PRK00685.1"/>
    <property type="match status" value="1"/>
</dbReference>
<dbReference type="PANTHER" id="PTHR43546:SF3">
    <property type="entry name" value="UPF0173 METAL-DEPENDENT HYDROLASE MJ1163"/>
    <property type="match status" value="1"/>
</dbReference>
<dbReference type="PANTHER" id="PTHR43546">
    <property type="entry name" value="UPF0173 METAL-DEPENDENT HYDROLASE MJ1163-RELATED"/>
    <property type="match status" value="1"/>
</dbReference>
<dbReference type="Pfam" id="PF12706">
    <property type="entry name" value="Lactamase_B_2"/>
    <property type="match status" value="1"/>
</dbReference>
<dbReference type="SMART" id="SM00849">
    <property type="entry name" value="Lactamase_B"/>
    <property type="match status" value="1"/>
</dbReference>
<dbReference type="SUPFAM" id="SSF56281">
    <property type="entry name" value="Metallo-hydrolase/oxidoreductase"/>
    <property type="match status" value="1"/>
</dbReference>
<keyword id="KW-0378">Hydrolase</keyword>
<organism>
    <name type="scientific">Cupriavidus taiwanensis (strain DSM 17343 / BCRC 17206 / CCUG 44338 / CIP 107171 / LMG 19424 / R1)</name>
    <name type="common">Ralstonia taiwanensis (strain LMG 19424)</name>
    <dbReference type="NCBI Taxonomy" id="977880"/>
    <lineage>
        <taxon>Bacteria</taxon>
        <taxon>Pseudomonadati</taxon>
        <taxon>Pseudomonadota</taxon>
        <taxon>Betaproteobacteria</taxon>
        <taxon>Burkholderiales</taxon>
        <taxon>Burkholderiaceae</taxon>
        <taxon>Cupriavidus</taxon>
    </lineage>
</organism>
<name>Y1748_CUPTR</name>
<protein>
    <recommendedName>
        <fullName evidence="1">UPF0173 metal-dependent hydrolase RALTA_A1748</fullName>
    </recommendedName>
</protein>
<reference key="1">
    <citation type="journal article" date="2008" name="Genome Res.">
        <title>Genome sequence of the beta-rhizobium Cupriavidus taiwanensis and comparative genomics of rhizobia.</title>
        <authorList>
            <person name="Amadou C."/>
            <person name="Pascal G."/>
            <person name="Mangenot S."/>
            <person name="Glew M."/>
            <person name="Bontemps C."/>
            <person name="Capela D."/>
            <person name="Carrere S."/>
            <person name="Cruveiller S."/>
            <person name="Dossat C."/>
            <person name="Lajus A."/>
            <person name="Marchetti M."/>
            <person name="Poinsot V."/>
            <person name="Rouy Z."/>
            <person name="Servin B."/>
            <person name="Saad M."/>
            <person name="Schenowitz C."/>
            <person name="Barbe V."/>
            <person name="Batut J."/>
            <person name="Medigue C."/>
            <person name="Masson-Boivin C."/>
        </authorList>
    </citation>
    <scope>NUCLEOTIDE SEQUENCE [LARGE SCALE GENOMIC DNA]</scope>
    <source>
        <strain>DSM 17343 / BCRC 17206 / CCUG 44338 / CIP 107171 / LMG 19424 / R1</strain>
    </source>
</reference>
<accession>B3R2H3</accession>
<evidence type="ECO:0000255" key="1">
    <source>
        <dbReference type="HAMAP-Rule" id="MF_00457"/>
    </source>
</evidence>
<gene>
    <name type="ordered locus">RALTA_A1748</name>
</gene>
<feature type="chain" id="PRO_0000367172" description="UPF0173 metal-dependent hydrolase RALTA_A1748">
    <location>
        <begin position="1"/>
        <end position="286"/>
    </location>
</feature>
<sequence length="286" mass="29810">MRLAALTTLCALLGACAAPAPPAAAPRPVAPGQPAAGKAEVLWLGQAATRITTPGGKVIVIDPWLTSNPKTPPGFRQLPALGKVDLILVTHAHNDHLGDTPALARLTNAPVYNGGGLGRALVSLGLVPEAQVQRFGKSGTVMPFGPSGPKITAVHAEHSSELSLKNPATGKDETHFGGEPVGYIIELENGFRIWHMGDTGLFGDMRMIGEIYKPDLVLIPIGGYSTMGPQEAAIAVRDLIRPRFAIPIHYQTSPQASGTPEEFKAALGANAAAGVIVPQPGEKVDF</sequence>